<evidence type="ECO:0000255" key="1">
    <source>
        <dbReference type="HAMAP-Rule" id="MF_04076"/>
    </source>
</evidence>
<evidence type="ECO:0000256" key="2">
    <source>
        <dbReference type="SAM" id="MobiDB-lite"/>
    </source>
</evidence>
<dbReference type="EMBL" id="X75663">
    <property type="protein sequence ID" value="CAA53353.1"/>
    <property type="molecule type" value="Genomic_DNA"/>
</dbReference>
<dbReference type="SMR" id="Q69608"/>
<dbReference type="Proteomes" id="UP000007406">
    <property type="component" value="Genome"/>
</dbReference>
<dbReference type="GO" id="GO:0043657">
    <property type="term" value="C:host cell"/>
    <property type="evidence" value="ECO:0007669"/>
    <property type="project" value="GOC"/>
</dbReference>
<dbReference type="GO" id="GO:0030430">
    <property type="term" value="C:host cell cytoplasm"/>
    <property type="evidence" value="ECO:0007669"/>
    <property type="project" value="UniProtKB-SubCell"/>
</dbReference>
<dbReference type="GO" id="GO:0039619">
    <property type="term" value="C:T=4 icosahedral viral capsid"/>
    <property type="evidence" value="ECO:0007669"/>
    <property type="project" value="UniProtKB-UniRule"/>
</dbReference>
<dbReference type="GO" id="GO:0003677">
    <property type="term" value="F:DNA binding"/>
    <property type="evidence" value="ECO:0007669"/>
    <property type="project" value="UniProtKB-UniRule"/>
</dbReference>
<dbReference type="GO" id="GO:0003723">
    <property type="term" value="F:RNA binding"/>
    <property type="evidence" value="ECO:0007669"/>
    <property type="project" value="UniProtKB-UniRule"/>
</dbReference>
<dbReference type="GO" id="GO:0005198">
    <property type="term" value="F:structural molecule activity"/>
    <property type="evidence" value="ECO:0007669"/>
    <property type="project" value="UniProtKB-UniRule"/>
</dbReference>
<dbReference type="GO" id="GO:0075521">
    <property type="term" value="P:microtubule-dependent intracellular transport of viral material towards nucleus"/>
    <property type="evidence" value="ECO:0007669"/>
    <property type="project" value="UniProtKB-UniRule"/>
</dbReference>
<dbReference type="GO" id="GO:0046718">
    <property type="term" value="P:symbiont entry into host cell"/>
    <property type="evidence" value="ECO:0007669"/>
    <property type="project" value="UniProtKB-UniRule"/>
</dbReference>
<dbReference type="GO" id="GO:0075732">
    <property type="term" value="P:viral penetration into host nucleus"/>
    <property type="evidence" value="ECO:0007669"/>
    <property type="project" value="UniProtKB-UniRule"/>
</dbReference>
<dbReference type="FunFam" id="1.10.4090.10:FF:000001">
    <property type="entry name" value="Capsid protein"/>
    <property type="match status" value="1"/>
</dbReference>
<dbReference type="Gene3D" id="1.10.4090.10">
    <property type="entry name" value="Viral capsid, core domain supefamily, Hepatitis B virus"/>
    <property type="match status" value="1"/>
</dbReference>
<dbReference type="HAMAP" id="MF_04076">
    <property type="entry name" value="HBV_HBEAG"/>
    <property type="match status" value="1"/>
</dbReference>
<dbReference type="InterPro" id="IPR002006">
    <property type="entry name" value="Hepatitis_core"/>
</dbReference>
<dbReference type="InterPro" id="IPR036459">
    <property type="entry name" value="Viral_capsid_core_dom_sf_HBV"/>
</dbReference>
<dbReference type="Pfam" id="PF00906">
    <property type="entry name" value="Hepatitis_core"/>
    <property type="match status" value="3"/>
</dbReference>
<dbReference type="SUPFAM" id="SSF47852">
    <property type="entry name" value="Hepatitis B viral capsid (hbcag)"/>
    <property type="match status" value="1"/>
</dbReference>
<organismHost>
    <name type="scientific">Homo sapiens</name>
    <name type="common">Human</name>
    <dbReference type="NCBI Taxonomy" id="9606"/>
</organismHost>
<organismHost>
    <name type="scientific">Pan troglodytes</name>
    <name type="common">Chimpanzee</name>
    <dbReference type="NCBI Taxonomy" id="9598"/>
</organismHost>
<reference key="1">
    <citation type="journal article" date="1994" name="Virology">
        <title>Complete genomes, phylogenetic relatedness, and structural proteins of six strains of the hepatitis B virus, four of which represent two new genotypes.</title>
        <authorList>
            <person name="Norder H."/>
            <person name="Courouce A.M."/>
            <person name="Magnius L.O."/>
        </authorList>
    </citation>
    <scope>NUCLEOTIDE SEQUENCE [GENOMIC DNA]</scope>
</reference>
<accession>Q69608</accession>
<proteinExistence type="inferred from homology"/>
<gene>
    <name evidence="1" type="primary">C</name>
</gene>
<sequence>MDIDPYKEFGASVELFSFLASDFFPSVRDLLDTASALYRDALESPEHCTPNHTALRQAILCWGELMTLASWVGNNLEDPAARDLVVNYVNTNMGLKIRQLLWFHISCLTFGRETVLEYLVSFGVWIRTPPAYRPPNAPILSTLPETTVVRRRGRSPRRRTPSPRRRRSQSPRRRRSQSPASQC</sequence>
<organism>
    <name type="scientific">Hepatitis B virus genotype F2 subtype adw4q (isolate Senegal/9203)</name>
    <name type="common">HBV-F</name>
    <dbReference type="NCBI Taxonomy" id="489503"/>
    <lineage>
        <taxon>Viruses</taxon>
        <taxon>Riboviria</taxon>
        <taxon>Pararnavirae</taxon>
        <taxon>Artverviricota</taxon>
        <taxon>Revtraviricetes</taxon>
        <taxon>Blubervirales</taxon>
        <taxon>Hepadnaviridae</taxon>
        <taxon>Orthohepadnavirus</taxon>
        <taxon>Hepatitis B virus</taxon>
        <taxon>hepatitis B virus genotype F</taxon>
    </lineage>
</organism>
<feature type="chain" id="PRO_0000324375" description="Capsid protein">
    <location>
        <begin position="1"/>
        <end position="183"/>
    </location>
</feature>
<feature type="repeat" description="1; half-length">
    <location>
        <begin position="155"/>
        <end position="161"/>
    </location>
</feature>
<feature type="repeat" description="2">
    <location>
        <begin position="162"/>
        <end position="169"/>
    </location>
</feature>
<feature type="repeat" description="3">
    <location>
        <begin position="170"/>
        <end position="177"/>
    </location>
</feature>
<feature type="region of interest" description="Disordered" evidence="2">
    <location>
        <begin position="136"/>
        <end position="183"/>
    </location>
</feature>
<feature type="region of interest" description="3 X 8 AA repeats of S-P-R-R-R-[PR]-S-Q">
    <location>
        <begin position="155"/>
        <end position="177"/>
    </location>
</feature>
<feature type="region of interest" description="RNA binding" evidence="1">
    <location>
        <begin position="177"/>
        <end position="183"/>
    </location>
</feature>
<feature type="short sequence motif" description="Bipartite nuclear localization signal" evidence="1">
    <location>
        <begin position="158"/>
        <end position="175"/>
    </location>
</feature>
<feature type="compositionally biased region" description="Basic residues" evidence="2">
    <location>
        <begin position="149"/>
        <end position="176"/>
    </location>
</feature>
<feature type="modified residue" description="Phosphoserine; by host" evidence="1">
    <location>
        <position position="155"/>
    </location>
</feature>
<feature type="modified residue" description="Phosphoserine; by host" evidence="1">
    <location>
        <position position="162"/>
    </location>
</feature>
<feature type="modified residue" description="Phosphoserine; by host" evidence="1">
    <location>
        <position position="170"/>
    </location>
</feature>
<name>CAPSD_HBVF6</name>
<comment type="function">
    <text evidence="1">Self assembles to form an icosahedral capsid. Most capsids appear to be large particles with an icosahedral symmetry of T=4 and consist of 240 copies of capsid protein, though a fraction forms smaller T=3 particles consisting of 180 capsid proteins. Entering capsids are transported along microtubules to the nucleus. Phosphorylation of the capsid is thought to induce exposure of nuclear localization signal in the C-terminal portion of the capsid protein that allows binding to the nuclear pore complex via the importin (karyopherin-) alpha and beta. Capsids are imported in intact form through the nuclear pore into the nuclear basket, where it probably binds NUP153. Only capsids that contain the mature viral genome can release the viral DNA and capsid protein into the nucleoplasm. Immature capsids get stuck in the basket. Capsids encapsulate the pre-genomic RNA and the P protein. Pre-genomic RNA is reverse-transcribed into DNA while the capsid is still in the cytoplasm. The capsid can then either be directed to the nucleus, providing more genomes for transcription, or bud through the endoplasmic reticulum to provide new virions.</text>
</comment>
<comment type="subunit">
    <text evidence="1">Homodimerizes, then multimerizes. Interacts with cytosol exposed regions of viral L glycoprotein present in the reticulum-to-Golgi compartment. Interacts with human FLNB. Phosphorylated form interacts with host importin alpha; this interaction depends on the exposure of the NLS, which itself depends upon genome maturation and/or phosphorylation of the capsid protein. Interacts with host NUP153.</text>
</comment>
<comment type="subcellular location">
    <subcellularLocation>
        <location evidence="1">Virion</location>
    </subcellularLocation>
    <subcellularLocation>
        <location evidence="1">Host cytoplasm</location>
    </subcellularLocation>
</comment>
<comment type="alternative products">
    <event type="alternative initiation"/>
    <isoform>
        <id>Q69608-1</id>
        <name>Capsid protein</name>
        <sequence type="displayed"/>
    </isoform>
    <isoform>
        <id>P0C6I5-1</id>
        <name>External core antigen</name>
        <sequence type="external"/>
    </isoform>
</comment>
<comment type="PTM">
    <text evidence="1">Phosphorylated by host SRPK1, SRPK2, and maybe protein kinase C or GAPDH. Phosphorylation is critical for pregenomic RNA packaging. Protein kinase C phosphorylation is stimulated by HBx protein and may play a role in transport of the viral genome to the nucleus at the late step during the viral replication cycle.</text>
</comment>
<comment type="similarity">
    <text evidence="1">Belongs to the orthohepadnavirus core antigen family.</text>
</comment>
<protein>
    <recommendedName>
        <fullName evidence="1">Capsid protein</fullName>
    </recommendedName>
    <alternativeName>
        <fullName evidence="1">Core antigen</fullName>
    </alternativeName>
    <alternativeName>
        <fullName evidence="1">Core protein</fullName>
    </alternativeName>
    <alternativeName>
        <fullName evidence="1">HBcAg</fullName>
    </alternativeName>
    <alternativeName>
        <fullName evidence="1">p21.5</fullName>
    </alternativeName>
</protein>
<keyword id="KW-0024">Alternative initiation</keyword>
<keyword id="KW-0167">Capsid protein</keyword>
<keyword id="KW-1176">Cytoplasmic inwards viral transport</keyword>
<keyword id="KW-0238">DNA-binding</keyword>
<keyword id="KW-1035">Host cytoplasm</keyword>
<keyword id="KW-0945">Host-virus interaction</keyword>
<keyword id="KW-1177">Microtubular inwards viral transport</keyword>
<keyword id="KW-0597">Phosphoprotein</keyword>
<keyword id="KW-0677">Repeat</keyword>
<keyword id="KW-0694">RNA-binding</keyword>
<keyword id="KW-1144">T=4 icosahedral capsid protein</keyword>
<keyword id="KW-1163">Viral penetration into host nucleus</keyword>
<keyword id="KW-0946">Virion</keyword>
<keyword id="KW-1160">Virus entry into host cell</keyword>